<evidence type="ECO:0000255" key="1">
    <source>
        <dbReference type="HAMAP-Rule" id="MF_01013"/>
    </source>
</evidence>
<comment type="function">
    <text evidence="1">IGPS catalyzes the conversion of PRFAR and glutamine to IGP, AICAR and glutamate. The HisF subunit catalyzes the cyclization activity that produces IGP and AICAR from PRFAR using the ammonia provided by the HisH subunit.</text>
</comment>
<comment type="catalytic activity">
    <reaction evidence="1">
        <text>5-[(5-phospho-1-deoxy-D-ribulos-1-ylimino)methylamino]-1-(5-phospho-beta-D-ribosyl)imidazole-4-carboxamide + L-glutamine = D-erythro-1-(imidazol-4-yl)glycerol 3-phosphate + 5-amino-1-(5-phospho-beta-D-ribosyl)imidazole-4-carboxamide + L-glutamate + H(+)</text>
        <dbReference type="Rhea" id="RHEA:24793"/>
        <dbReference type="ChEBI" id="CHEBI:15378"/>
        <dbReference type="ChEBI" id="CHEBI:29985"/>
        <dbReference type="ChEBI" id="CHEBI:58278"/>
        <dbReference type="ChEBI" id="CHEBI:58359"/>
        <dbReference type="ChEBI" id="CHEBI:58475"/>
        <dbReference type="ChEBI" id="CHEBI:58525"/>
        <dbReference type="EC" id="4.3.2.10"/>
    </reaction>
</comment>
<comment type="pathway">
    <text evidence="1">Amino-acid biosynthesis; L-histidine biosynthesis; L-histidine from 5-phospho-alpha-D-ribose 1-diphosphate: step 5/9.</text>
</comment>
<comment type="subunit">
    <text evidence="1">Heterodimer of HisH and HisF.</text>
</comment>
<comment type="subcellular location">
    <subcellularLocation>
        <location evidence="1">Cytoplasm</location>
    </subcellularLocation>
</comment>
<comment type="similarity">
    <text evidence="1">Belongs to the HisA/HisF family.</text>
</comment>
<keyword id="KW-0028">Amino-acid biosynthesis</keyword>
<keyword id="KW-0963">Cytoplasm</keyword>
<keyword id="KW-0368">Histidine biosynthesis</keyword>
<keyword id="KW-0456">Lyase</keyword>
<protein>
    <recommendedName>
        <fullName evidence="1">Imidazole glycerol phosphate synthase subunit HisF</fullName>
        <ecNumber evidence="1">4.3.2.10</ecNumber>
    </recommendedName>
    <alternativeName>
        <fullName evidence="1">IGP synthase cyclase subunit</fullName>
    </alternativeName>
    <alternativeName>
        <fullName evidence="1">IGP synthase subunit HisF</fullName>
    </alternativeName>
    <alternativeName>
        <fullName evidence="1">ImGP synthase subunit HisF</fullName>
        <shortName evidence="1">IGPS subunit HisF</shortName>
    </alternativeName>
</protein>
<name>HIS6_SOLUE</name>
<accession>Q01ZU6</accession>
<dbReference type="EC" id="4.3.2.10" evidence="1"/>
<dbReference type="EMBL" id="CP000473">
    <property type="protein sequence ID" value="ABJ84819.1"/>
    <property type="molecule type" value="Genomic_DNA"/>
</dbReference>
<dbReference type="SMR" id="Q01ZU6"/>
<dbReference type="FunCoup" id="Q01ZU6">
    <property type="interactions" value="625"/>
</dbReference>
<dbReference type="STRING" id="234267.Acid_3850"/>
<dbReference type="KEGG" id="sus:Acid_3850"/>
<dbReference type="eggNOG" id="COG0107">
    <property type="taxonomic scope" value="Bacteria"/>
</dbReference>
<dbReference type="HOGENOM" id="CLU_048577_4_0_0"/>
<dbReference type="InParanoid" id="Q01ZU6"/>
<dbReference type="OrthoDB" id="9781903at2"/>
<dbReference type="UniPathway" id="UPA00031">
    <property type="reaction ID" value="UER00010"/>
</dbReference>
<dbReference type="GO" id="GO:0005737">
    <property type="term" value="C:cytoplasm"/>
    <property type="evidence" value="ECO:0007669"/>
    <property type="project" value="UniProtKB-SubCell"/>
</dbReference>
<dbReference type="GO" id="GO:0000107">
    <property type="term" value="F:imidazoleglycerol-phosphate synthase activity"/>
    <property type="evidence" value="ECO:0007669"/>
    <property type="project" value="UniProtKB-UniRule"/>
</dbReference>
<dbReference type="GO" id="GO:0016829">
    <property type="term" value="F:lyase activity"/>
    <property type="evidence" value="ECO:0007669"/>
    <property type="project" value="UniProtKB-KW"/>
</dbReference>
<dbReference type="GO" id="GO:0000105">
    <property type="term" value="P:L-histidine biosynthetic process"/>
    <property type="evidence" value="ECO:0007669"/>
    <property type="project" value="UniProtKB-UniRule"/>
</dbReference>
<dbReference type="CDD" id="cd04731">
    <property type="entry name" value="HisF"/>
    <property type="match status" value="1"/>
</dbReference>
<dbReference type="FunFam" id="3.20.20.70:FF:000006">
    <property type="entry name" value="Imidazole glycerol phosphate synthase subunit HisF"/>
    <property type="match status" value="1"/>
</dbReference>
<dbReference type="Gene3D" id="3.20.20.70">
    <property type="entry name" value="Aldolase class I"/>
    <property type="match status" value="1"/>
</dbReference>
<dbReference type="HAMAP" id="MF_01013">
    <property type="entry name" value="HisF"/>
    <property type="match status" value="1"/>
</dbReference>
<dbReference type="InterPro" id="IPR013785">
    <property type="entry name" value="Aldolase_TIM"/>
</dbReference>
<dbReference type="InterPro" id="IPR006062">
    <property type="entry name" value="His_biosynth"/>
</dbReference>
<dbReference type="InterPro" id="IPR004651">
    <property type="entry name" value="HisF"/>
</dbReference>
<dbReference type="InterPro" id="IPR050064">
    <property type="entry name" value="IGPS_HisA/HisF"/>
</dbReference>
<dbReference type="InterPro" id="IPR011060">
    <property type="entry name" value="RibuloseP-bd_barrel"/>
</dbReference>
<dbReference type="NCBIfam" id="TIGR00735">
    <property type="entry name" value="hisF"/>
    <property type="match status" value="1"/>
</dbReference>
<dbReference type="PANTHER" id="PTHR21235:SF2">
    <property type="entry name" value="IMIDAZOLE GLYCEROL PHOSPHATE SYNTHASE HISHF"/>
    <property type="match status" value="1"/>
</dbReference>
<dbReference type="PANTHER" id="PTHR21235">
    <property type="entry name" value="IMIDAZOLE GLYCEROL PHOSPHATE SYNTHASE SUBUNIT HISF/H IGP SYNTHASE SUBUNIT HISF/H"/>
    <property type="match status" value="1"/>
</dbReference>
<dbReference type="Pfam" id="PF00977">
    <property type="entry name" value="His_biosynth"/>
    <property type="match status" value="1"/>
</dbReference>
<dbReference type="SUPFAM" id="SSF51366">
    <property type="entry name" value="Ribulose-phoshate binding barrel"/>
    <property type="match status" value="1"/>
</dbReference>
<organism>
    <name type="scientific">Solibacter usitatus (strain Ellin6076)</name>
    <dbReference type="NCBI Taxonomy" id="234267"/>
    <lineage>
        <taxon>Bacteria</taxon>
        <taxon>Pseudomonadati</taxon>
        <taxon>Acidobacteriota</taxon>
        <taxon>Terriglobia</taxon>
        <taxon>Bryobacterales</taxon>
        <taxon>Solibacteraceae</taxon>
        <taxon>Candidatus Solibacter</taxon>
    </lineage>
</organism>
<feature type="chain" id="PRO_1000063156" description="Imidazole glycerol phosphate synthase subunit HisF">
    <location>
        <begin position="1"/>
        <end position="254"/>
    </location>
</feature>
<feature type="active site" evidence="1">
    <location>
        <position position="11"/>
    </location>
</feature>
<feature type="active site" evidence="1">
    <location>
        <position position="130"/>
    </location>
</feature>
<reference key="1">
    <citation type="journal article" date="2009" name="Appl. Environ. Microbiol.">
        <title>Three genomes from the phylum Acidobacteria provide insight into the lifestyles of these microorganisms in soils.</title>
        <authorList>
            <person name="Ward N.L."/>
            <person name="Challacombe J.F."/>
            <person name="Janssen P.H."/>
            <person name="Henrissat B."/>
            <person name="Coutinho P.M."/>
            <person name="Wu M."/>
            <person name="Xie G."/>
            <person name="Haft D.H."/>
            <person name="Sait M."/>
            <person name="Badger J."/>
            <person name="Barabote R.D."/>
            <person name="Bradley B."/>
            <person name="Brettin T.S."/>
            <person name="Brinkac L.M."/>
            <person name="Bruce D."/>
            <person name="Creasy T."/>
            <person name="Daugherty S.C."/>
            <person name="Davidsen T.M."/>
            <person name="DeBoy R.T."/>
            <person name="Detter J.C."/>
            <person name="Dodson R.J."/>
            <person name="Durkin A.S."/>
            <person name="Ganapathy A."/>
            <person name="Gwinn-Giglio M."/>
            <person name="Han C.S."/>
            <person name="Khouri H."/>
            <person name="Kiss H."/>
            <person name="Kothari S.P."/>
            <person name="Madupu R."/>
            <person name="Nelson K.E."/>
            <person name="Nelson W.C."/>
            <person name="Paulsen I."/>
            <person name="Penn K."/>
            <person name="Ren Q."/>
            <person name="Rosovitz M.J."/>
            <person name="Selengut J.D."/>
            <person name="Shrivastava S."/>
            <person name="Sullivan S.A."/>
            <person name="Tapia R."/>
            <person name="Thompson L.S."/>
            <person name="Watkins K.L."/>
            <person name="Yang Q."/>
            <person name="Yu C."/>
            <person name="Zafar N."/>
            <person name="Zhou L."/>
            <person name="Kuske C.R."/>
        </authorList>
    </citation>
    <scope>NUCLEOTIDE SEQUENCE [LARGE SCALE GENOMIC DNA]</scope>
    <source>
        <strain>Ellin6076</strain>
    </source>
</reference>
<proteinExistence type="inferred from homology"/>
<sequence>MLAKRIIPCLDVTGGRVVKGVNFVNLRDAGDPVELADRYNLDGADELVFLDITASSDARDIMADVVARTARKVFIPLAVGGGIRSIADARHILLSGADKVSVNTAAVRRPELITELSRELGAQAVVLAIDARRHGPGGWHVYTRGGRDDEGMDAVAWAARGEALGAGEVLLTSMDTDGVQDGFDCALTMAVSRATHIPVIASGGAGKPEHFVRVLTDGCADAALAASIFHYGTYTVNQLKEALDKRGIPVRVTA</sequence>
<gene>
    <name evidence="1" type="primary">hisF</name>
    <name type="ordered locus">Acid_3850</name>
</gene>